<dbReference type="EMBL" id="AF167164">
    <property type="protein sequence ID" value="AAF03684.1"/>
    <property type="molecule type" value="mRNA"/>
</dbReference>
<dbReference type="PIR" id="B59147">
    <property type="entry name" value="B59147"/>
</dbReference>
<dbReference type="ConoServer" id="1730">
    <property type="toxin name" value="Tx5.1 precursor"/>
</dbReference>
<dbReference type="GO" id="GO:0005576">
    <property type="term" value="C:extracellular region"/>
    <property type="evidence" value="ECO:0007669"/>
    <property type="project" value="UniProtKB-SubCell"/>
</dbReference>
<dbReference type="GO" id="GO:0090729">
    <property type="term" value="F:toxin activity"/>
    <property type="evidence" value="ECO:0007669"/>
    <property type="project" value="UniProtKB-KW"/>
</dbReference>
<dbReference type="InterPro" id="IPR031565">
    <property type="entry name" value="T-conotoxin"/>
</dbReference>
<dbReference type="Pfam" id="PF16981">
    <property type="entry name" value="Chi-conotoxin"/>
    <property type="match status" value="1"/>
</dbReference>
<keyword id="KW-0027">Amidation</keyword>
<keyword id="KW-1015">Disulfide bond</keyword>
<keyword id="KW-0964">Secreted</keyword>
<keyword id="KW-0732">Signal</keyword>
<keyword id="KW-0800">Toxin</keyword>
<comment type="subcellular location">
    <subcellularLocation>
        <location evidence="2">Secreted</location>
    </subcellularLocation>
</comment>
<comment type="tissue specificity">
    <text evidence="5">Expressed by the venom duct.</text>
</comment>
<comment type="domain">
    <text evidence="4">The cysteine framework is V (CC-CC).</text>
</comment>
<comment type="PTM">
    <text evidence="4">Contains 2 disulfide bonds that can be either 'C1-C3, C2-C4' or 'C1-C4, C2-C3', since these disulfide connectivities have been observed for conotoxins with cysteine framework V (for examples, see AC P0DQQ7 and AC P81755).</text>
</comment>
<comment type="similarity">
    <text evidence="4">Belongs to the conotoxin T superfamily.</text>
</comment>
<reference key="1">
    <citation type="journal article" date="1999" name="J. Biol. Chem.">
        <title>The T-superfamily of conotoxins.</title>
        <authorList>
            <person name="Walker C.S."/>
            <person name="Steel D."/>
            <person name="Jacobsen R.B."/>
            <person name="Lirazan M.B."/>
            <person name="Cruz L.J."/>
            <person name="Hooper D."/>
            <person name="Shetty R."/>
            <person name="DelaCruz R.C."/>
            <person name="Nielsen J.S."/>
            <person name="Zhou L.M."/>
            <person name="Bandyopadhyay P."/>
            <person name="Craig A.G."/>
            <person name="Olivera B.M."/>
        </authorList>
    </citation>
    <scope>NUCLEOTIDE SEQUENCE [MRNA]</scope>
    <source>
        <tissue>Venom duct</tissue>
    </source>
</reference>
<reference key="2">
    <citation type="journal article" date="1999" name="J. Biol. Chem.">
        <authorList>
            <person name="Walker C.S."/>
            <person name="Steel D."/>
            <person name="Jacobsen R.B."/>
            <person name="Lirazan M.B."/>
            <person name="Cruz L.J."/>
            <person name="Hooper D."/>
            <person name="Shetty R."/>
            <person name="DelaCruz R.C."/>
            <person name="Nielsen J.S."/>
            <person name="Zhou L.M."/>
            <person name="Bandyopadhyay P."/>
            <person name="Craig A.G."/>
            <person name="Olivera B.M."/>
        </authorList>
    </citation>
    <scope>ERRATUM OF PUBMED:10521453</scope>
</reference>
<reference key="3">
    <citation type="journal article" date="2012" name="J. Proteome Res.">
        <title>Constrained de novo sequencing of conotoxins.</title>
        <authorList>
            <person name="Bhatia S."/>
            <person name="Kil Y.J."/>
            <person name="Ueberheide B."/>
            <person name="Chait B.T."/>
            <person name="Tayo L."/>
            <person name="Cruz L."/>
            <person name="Lu B."/>
            <person name="Yates J.R. III"/>
            <person name="Bern M."/>
        </authorList>
    </citation>
    <scope>IDENTIFICATION BY MASS SPECTROMETRY</scope>
    <scope>SUBCELLULAR LOCATION</scope>
    <scope>AMIDATION AT GLN-60</scope>
    <source>
        <tissue>Venom</tissue>
    </source>
</reference>
<feature type="signal peptide" evidence="1">
    <location>
        <begin position="1"/>
        <end position="22"/>
    </location>
</feature>
<feature type="propeptide" id="PRO_0000035041" evidence="4">
    <location>
        <begin position="23"/>
        <end position="49"/>
    </location>
</feature>
<feature type="peptide" id="PRO_0000035042" description="Conotoxin Tx5.1" evidence="2">
    <location>
        <begin position="50"/>
        <end position="60"/>
    </location>
</feature>
<feature type="modified residue" description="Glutamine amide" evidence="2">
    <location>
        <position position="60"/>
    </location>
</feature>
<evidence type="ECO:0000255" key="1"/>
<evidence type="ECO:0000269" key="2">
    <source>
    </source>
</evidence>
<evidence type="ECO:0000303" key="3">
    <source>
    </source>
</evidence>
<evidence type="ECO:0000305" key="4"/>
<evidence type="ECO:0000305" key="5">
    <source>
    </source>
</evidence>
<accession>Q9U700</accession>
<proteinExistence type="evidence at protein level"/>
<organism>
    <name type="scientific">Conus textile</name>
    <name type="common">Cloth-of-gold cone</name>
    <dbReference type="NCBI Taxonomy" id="6494"/>
    <lineage>
        <taxon>Eukaryota</taxon>
        <taxon>Metazoa</taxon>
        <taxon>Spiralia</taxon>
        <taxon>Lophotrochozoa</taxon>
        <taxon>Mollusca</taxon>
        <taxon>Gastropoda</taxon>
        <taxon>Caenogastropoda</taxon>
        <taxon>Neogastropoda</taxon>
        <taxon>Conoidea</taxon>
        <taxon>Conidae</taxon>
        <taxon>Conus</taxon>
        <taxon>Cylinder</taxon>
    </lineage>
</organism>
<sequence>MCCLPVFVILLLLIASAPSVDAQPKTKDDVPLAPLHDNAKSALQHLNQRCCQTFYWCCVQGK</sequence>
<name>CT51_CONTE</name>
<protein>
    <recommendedName>
        <fullName evidence="3">Conotoxin Tx5.1</fullName>
    </recommendedName>
</protein>